<proteinExistence type="inferred from homology"/>
<evidence type="ECO:0000255" key="1">
    <source>
        <dbReference type="HAMAP-Rule" id="MF_01345"/>
    </source>
</evidence>
<evidence type="ECO:0000305" key="2"/>
<reference key="1">
    <citation type="submission" date="2009-01" db="EMBL/GenBank/DDBJ databases">
        <title>Complete sequence of Clostridium cellulolyticum H10.</title>
        <authorList>
            <consortium name="US DOE Joint Genome Institute"/>
            <person name="Lucas S."/>
            <person name="Copeland A."/>
            <person name="Lapidus A."/>
            <person name="Glavina del Rio T."/>
            <person name="Dalin E."/>
            <person name="Tice H."/>
            <person name="Bruce D."/>
            <person name="Goodwin L."/>
            <person name="Pitluck S."/>
            <person name="Chertkov O."/>
            <person name="Saunders E."/>
            <person name="Brettin T."/>
            <person name="Detter J.C."/>
            <person name="Han C."/>
            <person name="Larimer F."/>
            <person name="Land M."/>
            <person name="Hauser L."/>
            <person name="Kyrpides N."/>
            <person name="Ivanova N."/>
            <person name="Zhou J."/>
            <person name="Richardson P."/>
        </authorList>
    </citation>
    <scope>NUCLEOTIDE SEQUENCE [LARGE SCALE GENOMIC DNA]</scope>
    <source>
        <strain>ATCC 35319 / DSM 5812 / JCM 6584 / H10</strain>
    </source>
</reference>
<keyword id="KW-1185">Reference proteome</keyword>
<keyword id="KW-0687">Ribonucleoprotein</keyword>
<keyword id="KW-0689">Ribosomal protein</keyword>
<keyword id="KW-0694">RNA-binding</keyword>
<keyword id="KW-0699">rRNA-binding</keyword>
<accession>B8I7Y8</accession>
<organism>
    <name type="scientific">Ruminiclostridium cellulolyticum (strain ATCC 35319 / DSM 5812 / JCM 6584 / H10)</name>
    <name type="common">Clostridium cellulolyticum</name>
    <dbReference type="NCBI Taxonomy" id="394503"/>
    <lineage>
        <taxon>Bacteria</taxon>
        <taxon>Bacillati</taxon>
        <taxon>Bacillota</taxon>
        <taxon>Clostridia</taxon>
        <taxon>Eubacteriales</taxon>
        <taxon>Oscillospiraceae</taxon>
        <taxon>Ruminiclostridium</taxon>
    </lineage>
</organism>
<feature type="chain" id="PRO_1000166470" description="Small ribosomal subunit protein uS17">
    <location>
        <begin position="1"/>
        <end position="85"/>
    </location>
</feature>
<comment type="function">
    <text evidence="1">One of the primary rRNA binding proteins, it binds specifically to the 5'-end of 16S ribosomal RNA.</text>
</comment>
<comment type="subunit">
    <text evidence="1">Part of the 30S ribosomal subunit.</text>
</comment>
<comment type="similarity">
    <text evidence="1">Belongs to the universal ribosomal protein uS17 family.</text>
</comment>
<protein>
    <recommendedName>
        <fullName evidence="1">Small ribosomal subunit protein uS17</fullName>
    </recommendedName>
    <alternativeName>
        <fullName evidence="2">30S ribosomal protein S17</fullName>
    </alternativeName>
</protein>
<gene>
    <name evidence="1" type="primary">rpsQ</name>
    <name type="ordered locus">Ccel_0767</name>
</gene>
<name>RS17_RUMCH</name>
<dbReference type="EMBL" id="CP001348">
    <property type="protein sequence ID" value="ACL75145.1"/>
    <property type="molecule type" value="Genomic_DNA"/>
</dbReference>
<dbReference type="RefSeq" id="WP_015924310.1">
    <property type="nucleotide sequence ID" value="NC_011898.1"/>
</dbReference>
<dbReference type="SMR" id="B8I7Y8"/>
<dbReference type="STRING" id="394503.Ccel_0767"/>
<dbReference type="KEGG" id="cce:Ccel_0767"/>
<dbReference type="eggNOG" id="COG0186">
    <property type="taxonomic scope" value="Bacteria"/>
</dbReference>
<dbReference type="HOGENOM" id="CLU_073626_1_0_9"/>
<dbReference type="OrthoDB" id="9811714at2"/>
<dbReference type="Proteomes" id="UP000001349">
    <property type="component" value="Chromosome"/>
</dbReference>
<dbReference type="GO" id="GO:0022627">
    <property type="term" value="C:cytosolic small ribosomal subunit"/>
    <property type="evidence" value="ECO:0007669"/>
    <property type="project" value="TreeGrafter"/>
</dbReference>
<dbReference type="GO" id="GO:0019843">
    <property type="term" value="F:rRNA binding"/>
    <property type="evidence" value="ECO:0007669"/>
    <property type="project" value="UniProtKB-UniRule"/>
</dbReference>
<dbReference type="GO" id="GO:0003735">
    <property type="term" value="F:structural constituent of ribosome"/>
    <property type="evidence" value="ECO:0007669"/>
    <property type="project" value="InterPro"/>
</dbReference>
<dbReference type="GO" id="GO:0006412">
    <property type="term" value="P:translation"/>
    <property type="evidence" value="ECO:0007669"/>
    <property type="project" value="UniProtKB-UniRule"/>
</dbReference>
<dbReference type="CDD" id="cd00364">
    <property type="entry name" value="Ribosomal_uS17"/>
    <property type="match status" value="1"/>
</dbReference>
<dbReference type="FunFam" id="2.40.50.140:FF:000123">
    <property type="entry name" value="30S ribosomal protein S17"/>
    <property type="match status" value="1"/>
</dbReference>
<dbReference type="Gene3D" id="2.40.50.140">
    <property type="entry name" value="Nucleic acid-binding proteins"/>
    <property type="match status" value="1"/>
</dbReference>
<dbReference type="HAMAP" id="MF_01345_B">
    <property type="entry name" value="Ribosomal_uS17_B"/>
    <property type="match status" value="1"/>
</dbReference>
<dbReference type="InterPro" id="IPR012340">
    <property type="entry name" value="NA-bd_OB-fold"/>
</dbReference>
<dbReference type="InterPro" id="IPR000266">
    <property type="entry name" value="Ribosomal_uS17"/>
</dbReference>
<dbReference type="InterPro" id="IPR019984">
    <property type="entry name" value="Ribosomal_uS17_bact/chlr"/>
</dbReference>
<dbReference type="InterPro" id="IPR019979">
    <property type="entry name" value="Ribosomal_uS17_CS"/>
</dbReference>
<dbReference type="NCBIfam" id="NF004123">
    <property type="entry name" value="PRK05610.1"/>
    <property type="match status" value="1"/>
</dbReference>
<dbReference type="NCBIfam" id="TIGR03635">
    <property type="entry name" value="uS17_bact"/>
    <property type="match status" value="1"/>
</dbReference>
<dbReference type="PANTHER" id="PTHR10744">
    <property type="entry name" value="40S RIBOSOMAL PROTEIN S11 FAMILY MEMBER"/>
    <property type="match status" value="1"/>
</dbReference>
<dbReference type="PANTHER" id="PTHR10744:SF1">
    <property type="entry name" value="SMALL RIBOSOMAL SUBUNIT PROTEIN US17M"/>
    <property type="match status" value="1"/>
</dbReference>
<dbReference type="Pfam" id="PF00366">
    <property type="entry name" value="Ribosomal_S17"/>
    <property type="match status" value="1"/>
</dbReference>
<dbReference type="PRINTS" id="PR00973">
    <property type="entry name" value="RIBOSOMALS17"/>
</dbReference>
<dbReference type="SUPFAM" id="SSF50249">
    <property type="entry name" value="Nucleic acid-binding proteins"/>
    <property type="match status" value="1"/>
</dbReference>
<dbReference type="PROSITE" id="PS00056">
    <property type="entry name" value="RIBOSOMAL_S17"/>
    <property type="match status" value="1"/>
</dbReference>
<sequence length="85" mass="9917">MVERALRKTRVGKVVSNKMDKTIVVAIETSVKHPLYGKIVKRTYKLKAHDEENQCQIGDKVKVMETRPLSKEKRWRLVQIVEKAQ</sequence>